<reference key="1">
    <citation type="journal article" date="2006" name="Proc. Natl. Acad. Sci. U.S.A.">
        <title>Genome sequence of Synechococcus CC9311: insights into adaptation to a coastal environment.</title>
        <authorList>
            <person name="Palenik B."/>
            <person name="Ren Q."/>
            <person name="Dupont C.L."/>
            <person name="Myers G.S."/>
            <person name="Heidelberg J.F."/>
            <person name="Badger J.H."/>
            <person name="Madupu R."/>
            <person name="Nelson W.C."/>
            <person name="Brinkac L.M."/>
            <person name="Dodson R.J."/>
            <person name="Durkin A.S."/>
            <person name="Daugherty S.C."/>
            <person name="Sullivan S.A."/>
            <person name="Khouri H."/>
            <person name="Mohamoud Y."/>
            <person name="Halpin R."/>
            <person name="Paulsen I.T."/>
        </authorList>
    </citation>
    <scope>NUCLEOTIDE SEQUENCE [LARGE SCALE GENOMIC DNA]</scope>
    <source>
        <strain>CC9311</strain>
    </source>
</reference>
<evidence type="ECO:0000255" key="1">
    <source>
        <dbReference type="HAMAP-Rule" id="MF_01343"/>
    </source>
</evidence>
<evidence type="ECO:0000256" key="2">
    <source>
        <dbReference type="SAM" id="MobiDB-lite"/>
    </source>
</evidence>
<evidence type="ECO:0000305" key="3"/>
<protein>
    <recommendedName>
        <fullName evidence="1">Small ribosomal subunit protein uS15</fullName>
    </recommendedName>
    <alternativeName>
        <fullName evidence="3">30S ribosomal protein S15</fullName>
    </alternativeName>
</protein>
<sequence length="89" mass="10082">MSLDTTEKQQLINSHQTHATDTGSAEVQVAMLSERISKLSSHLQQNIHDYSSRQGLLKMIGRRKRLLGYVRGKSEQRYSDLISKLGIRG</sequence>
<accession>Q0I9N9</accession>
<name>RS15_SYNS3</name>
<comment type="function">
    <text evidence="1">One of the primary rRNA binding proteins, it binds directly to 16S rRNA where it helps nucleate assembly of the platform of the 30S subunit by binding and bridging several RNA helices of the 16S rRNA.</text>
</comment>
<comment type="function">
    <text evidence="1">Forms an intersubunit bridge (bridge B4) with the 23S rRNA of the 50S subunit in the ribosome.</text>
</comment>
<comment type="subunit">
    <text evidence="1">Part of the 30S ribosomal subunit. Forms a bridge to the 50S subunit in the 70S ribosome, contacting the 23S rRNA.</text>
</comment>
<comment type="similarity">
    <text evidence="1">Belongs to the universal ribosomal protein uS15 family.</text>
</comment>
<organism>
    <name type="scientific">Synechococcus sp. (strain CC9311)</name>
    <dbReference type="NCBI Taxonomy" id="64471"/>
    <lineage>
        <taxon>Bacteria</taxon>
        <taxon>Bacillati</taxon>
        <taxon>Cyanobacteriota</taxon>
        <taxon>Cyanophyceae</taxon>
        <taxon>Synechococcales</taxon>
        <taxon>Synechococcaceae</taxon>
        <taxon>Synechococcus</taxon>
    </lineage>
</organism>
<proteinExistence type="inferred from homology"/>
<gene>
    <name evidence="1" type="primary">rpsO</name>
    <name evidence="1" type="synonym">rps15</name>
    <name type="ordered locus">sync_1628</name>
</gene>
<keyword id="KW-1185">Reference proteome</keyword>
<keyword id="KW-0687">Ribonucleoprotein</keyword>
<keyword id="KW-0689">Ribosomal protein</keyword>
<keyword id="KW-0694">RNA-binding</keyword>
<keyword id="KW-0699">rRNA-binding</keyword>
<feature type="chain" id="PRO_1000054888" description="Small ribosomal subunit protein uS15">
    <location>
        <begin position="1"/>
        <end position="89"/>
    </location>
</feature>
<feature type="region of interest" description="Disordered" evidence="2">
    <location>
        <begin position="1"/>
        <end position="24"/>
    </location>
</feature>
<feature type="compositionally biased region" description="Polar residues" evidence="2">
    <location>
        <begin position="8"/>
        <end position="24"/>
    </location>
</feature>
<dbReference type="EMBL" id="CP000435">
    <property type="protein sequence ID" value="ABI46298.1"/>
    <property type="molecule type" value="Genomic_DNA"/>
</dbReference>
<dbReference type="RefSeq" id="WP_006852884.1">
    <property type="nucleotide sequence ID" value="NC_008319.1"/>
</dbReference>
<dbReference type="SMR" id="Q0I9N9"/>
<dbReference type="STRING" id="64471.sync_1628"/>
<dbReference type="KEGG" id="syg:sync_1628"/>
<dbReference type="eggNOG" id="COG0184">
    <property type="taxonomic scope" value="Bacteria"/>
</dbReference>
<dbReference type="HOGENOM" id="CLU_148518_0_0_3"/>
<dbReference type="OrthoDB" id="9799262at2"/>
<dbReference type="Proteomes" id="UP000001961">
    <property type="component" value="Chromosome"/>
</dbReference>
<dbReference type="GO" id="GO:0022627">
    <property type="term" value="C:cytosolic small ribosomal subunit"/>
    <property type="evidence" value="ECO:0007669"/>
    <property type="project" value="TreeGrafter"/>
</dbReference>
<dbReference type="GO" id="GO:0019843">
    <property type="term" value="F:rRNA binding"/>
    <property type="evidence" value="ECO:0007669"/>
    <property type="project" value="UniProtKB-UniRule"/>
</dbReference>
<dbReference type="GO" id="GO:0003735">
    <property type="term" value="F:structural constituent of ribosome"/>
    <property type="evidence" value="ECO:0007669"/>
    <property type="project" value="InterPro"/>
</dbReference>
<dbReference type="GO" id="GO:0006412">
    <property type="term" value="P:translation"/>
    <property type="evidence" value="ECO:0007669"/>
    <property type="project" value="UniProtKB-UniRule"/>
</dbReference>
<dbReference type="CDD" id="cd00353">
    <property type="entry name" value="Ribosomal_S15p_S13e"/>
    <property type="match status" value="1"/>
</dbReference>
<dbReference type="FunFam" id="1.10.287.10:FF:000002">
    <property type="entry name" value="30S ribosomal protein S15"/>
    <property type="match status" value="1"/>
</dbReference>
<dbReference type="Gene3D" id="6.10.250.3130">
    <property type="match status" value="1"/>
</dbReference>
<dbReference type="Gene3D" id="1.10.287.10">
    <property type="entry name" value="S15/NS1, RNA-binding"/>
    <property type="match status" value="1"/>
</dbReference>
<dbReference type="HAMAP" id="MF_01343_B">
    <property type="entry name" value="Ribosomal_uS15_B"/>
    <property type="match status" value="1"/>
</dbReference>
<dbReference type="InterPro" id="IPR000589">
    <property type="entry name" value="Ribosomal_uS15"/>
</dbReference>
<dbReference type="InterPro" id="IPR005290">
    <property type="entry name" value="Ribosomal_uS15_bac-type"/>
</dbReference>
<dbReference type="InterPro" id="IPR009068">
    <property type="entry name" value="uS15_NS1_RNA-bd_sf"/>
</dbReference>
<dbReference type="NCBIfam" id="TIGR00952">
    <property type="entry name" value="S15_bact"/>
    <property type="match status" value="1"/>
</dbReference>
<dbReference type="PANTHER" id="PTHR23321">
    <property type="entry name" value="RIBOSOMAL PROTEIN S15, BACTERIAL AND ORGANELLAR"/>
    <property type="match status" value="1"/>
</dbReference>
<dbReference type="PANTHER" id="PTHR23321:SF26">
    <property type="entry name" value="SMALL RIBOSOMAL SUBUNIT PROTEIN US15M"/>
    <property type="match status" value="1"/>
</dbReference>
<dbReference type="Pfam" id="PF00312">
    <property type="entry name" value="Ribosomal_S15"/>
    <property type="match status" value="1"/>
</dbReference>
<dbReference type="SMART" id="SM01387">
    <property type="entry name" value="Ribosomal_S15"/>
    <property type="match status" value="1"/>
</dbReference>
<dbReference type="SUPFAM" id="SSF47060">
    <property type="entry name" value="S15/NS1 RNA-binding domain"/>
    <property type="match status" value="1"/>
</dbReference>
<dbReference type="PROSITE" id="PS00362">
    <property type="entry name" value="RIBOSOMAL_S15"/>
    <property type="match status" value="1"/>
</dbReference>